<keyword id="KW-0113">Calvin cycle</keyword>
<keyword id="KW-0120">Carbon dioxide fixation</keyword>
<keyword id="KW-0456">Lyase</keyword>
<keyword id="KW-0460">Magnesium</keyword>
<keyword id="KW-0479">Metal-binding</keyword>
<keyword id="KW-0503">Monooxygenase</keyword>
<keyword id="KW-0560">Oxidoreductase</keyword>
<keyword id="KW-1185">Reference proteome</keyword>
<proteinExistence type="inferred from homology"/>
<comment type="function">
    <text evidence="1">RuBisCO catalyzes two reactions: the carboxylation of D-ribulose 1,5-bisphosphate, the primary event in carbon dioxide fixation, as well as the oxidative fragmentation of the pentose substrate. Both reactions occur simultaneously and in competition at the same active site.</text>
</comment>
<comment type="catalytic activity">
    <reaction evidence="1">
        <text>2 (2R)-3-phosphoglycerate + 2 H(+) = D-ribulose 1,5-bisphosphate + CO2 + H2O</text>
        <dbReference type="Rhea" id="RHEA:23124"/>
        <dbReference type="ChEBI" id="CHEBI:15377"/>
        <dbReference type="ChEBI" id="CHEBI:15378"/>
        <dbReference type="ChEBI" id="CHEBI:16526"/>
        <dbReference type="ChEBI" id="CHEBI:57870"/>
        <dbReference type="ChEBI" id="CHEBI:58272"/>
        <dbReference type="EC" id="4.1.1.39"/>
    </reaction>
</comment>
<comment type="catalytic activity">
    <reaction evidence="1">
        <text>D-ribulose 1,5-bisphosphate + O2 = 2-phosphoglycolate + (2R)-3-phosphoglycerate + 2 H(+)</text>
        <dbReference type="Rhea" id="RHEA:36631"/>
        <dbReference type="ChEBI" id="CHEBI:15378"/>
        <dbReference type="ChEBI" id="CHEBI:15379"/>
        <dbReference type="ChEBI" id="CHEBI:57870"/>
        <dbReference type="ChEBI" id="CHEBI:58033"/>
        <dbReference type="ChEBI" id="CHEBI:58272"/>
    </reaction>
</comment>
<comment type="cofactor">
    <cofactor evidence="1">
        <name>Mg(2+)</name>
        <dbReference type="ChEBI" id="CHEBI:18420"/>
    </cofactor>
    <text evidence="1">Binds 1 Mg(2+) ion per subunit.</text>
</comment>
<comment type="subunit">
    <text evidence="1">Heterohexadecamer of 8 large chains and 8 small chains.</text>
</comment>
<comment type="miscellaneous">
    <text evidence="1">The basic functional RuBisCO is composed of a large chain homodimer in a 'head-to-tail' conformation. In form I RuBisCO this homodimer is arranged in a barrel-like tetramer with the small subunits forming a tetrameric 'cap' on each end of the 'barrel'.</text>
</comment>
<comment type="similarity">
    <text evidence="1">Belongs to the RuBisCO large chain family. Type I subfamily.</text>
</comment>
<gene>
    <name evidence="1" type="primary">cbbL</name>
    <name type="ordered locus">Acry_0824</name>
</gene>
<organism>
    <name type="scientific">Acidiphilium cryptum (strain JF-5)</name>
    <dbReference type="NCBI Taxonomy" id="349163"/>
    <lineage>
        <taxon>Bacteria</taxon>
        <taxon>Pseudomonadati</taxon>
        <taxon>Pseudomonadota</taxon>
        <taxon>Alphaproteobacteria</taxon>
        <taxon>Acetobacterales</taxon>
        <taxon>Acidocellaceae</taxon>
        <taxon>Acidiphilium</taxon>
    </lineage>
</organism>
<name>RBL_ACICJ</name>
<protein>
    <recommendedName>
        <fullName evidence="1">Ribulose bisphosphate carboxylase large chain</fullName>
        <shortName evidence="1">RuBisCO large subunit</shortName>
        <ecNumber evidence="1">4.1.1.39</ecNumber>
    </recommendedName>
</protein>
<evidence type="ECO:0000255" key="1">
    <source>
        <dbReference type="HAMAP-Rule" id="MF_01338"/>
    </source>
</evidence>
<reference key="1">
    <citation type="submission" date="2007-05" db="EMBL/GenBank/DDBJ databases">
        <title>Complete sequence of chromosome of Acidiphilium cryptum JF-5.</title>
        <authorList>
            <consortium name="US DOE Joint Genome Institute"/>
            <person name="Copeland A."/>
            <person name="Lucas S."/>
            <person name="Lapidus A."/>
            <person name="Barry K."/>
            <person name="Detter J.C."/>
            <person name="Glavina del Rio T."/>
            <person name="Hammon N."/>
            <person name="Israni S."/>
            <person name="Dalin E."/>
            <person name="Tice H."/>
            <person name="Pitluck S."/>
            <person name="Sims D."/>
            <person name="Brettin T."/>
            <person name="Bruce D."/>
            <person name="Han C."/>
            <person name="Schmutz J."/>
            <person name="Larimer F."/>
            <person name="Land M."/>
            <person name="Hauser L."/>
            <person name="Kyrpides N."/>
            <person name="Kim E."/>
            <person name="Magnuson T."/>
            <person name="Richardson P."/>
        </authorList>
    </citation>
    <scope>NUCLEOTIDE SEQUENCE [LARGE SCALE GENOMIC DNA]</scope>
    <source>
        <strain>JF-5</strain>
    </source>
</reference>
<dbReference type="EC" id="4.1.1.39" evidence="1"/>
<dbReference type="EMBL" id="CP000697">
    <property type="protein sequence ID" value="ABQ30043.1"/>
    <property type="molecule type" value="Genomic_DNA"/>
</dbReference>
<dbReference type="RefSeq" id="WP_007422833.1">
    <property type="nucleotide sequence ID" value="NC_009484.1"/>
</dbReference>
<dbReference type="SMR" id="A5FWR1"/>
<dbReference type="STRING" id="349163.Acry_0824"/>
<dbReference type="KEGG" id="acr:Acry_0824"/>
<dbReference type="eggNOG" id="COG1850">
    <property type="taxonomic scope" value="Bacteria"/>
</dbReference>
<dbReference type="HOGENOM" id="CLU_031450_2_0_5"/>
<dbReference type="Proteomes" id="UP000000245">
    <property type="component" value="Chromosome"/>
</dbReference>
<dbReference type="GO" id="GO:0000287">
    <property type="term" value="F:magnesium ion binding"/>
    <property type="evidence" value="ECO:0007669"/>
    <property type="project" value="UniProtKB-UniRule"/>
</dbReference>
<dbReference type="GO" id="GO:0004497">
    <property type="term" value="F:monooxygenase activity"/>
    <property type="evidence" value="ECO:0007669"/>
    <property type="project" value="UniProtKB-KW"/>
</dbReference>
<dbReference type="GO" id="GO:0016984">
    <property type="term" value="F:ribulose-bisphosphate carboxylase activity"/>
    <property type="evidence" value="ECO:0007669"/>
    <property type="project" value="UniProtKB-UniRule"/>
</dbReference>
<dbReference type="GO" id="GO:0019253">
    <property type="term" value="P:reductive pentose-phosphate cycle"/>
    <property type="evidence" value="ECO:0007669"/>
    <property type="project" value="UniProtKB-UniRule"/>
</dbReference>
<dbReference type="CDD" id="cd08212">
    <property type="entry name" value="RuBisCO_large_I"/>
    <property type="match status" value="1"/>
</dbReference>
<dbReference type="Gene3D" id="3.20.20.110">
    <property type="entry name" value="Ribulose bisphosphate carboxylase, large subunit, C-terminal domain"/>
    <property type="match status" value="1"/>
</dbReference>
<dbReference type="Gene3D" id="3.30.70.150">
    <property type="entry name" value="RuBisCO large subunit, N-terminal domain"/>
    <property type="match status" value="1"/>
</dbReference>
<dbReference type="HAMAP" id="MF_01338">
    <property type="entry name" value="RuBisCO_L_type1"/>
    <property type="match status" value="1"/>
</dbReference>
<dbReference type="InterPro" id="IPR033966">
    <property type="entry name" value="RuBisCO"/>
</dbReference>
<dbReference type="InterPro" id="IPR020878">
    <property type="entry name" value="RuBisCo_large_chain_AS"/>
</dbReference>
<dbReference type="InterPro" id="IPR000685">
    <property type="entry name" value="RuBisCO_lsu_C"/>
</dbReference>
<dbReference type="InterPro" id="IPR036376">
    <property type="entry name" value="RuBisCO_lsu_C_sf"/>
</dbReference>
<dbReference type="InterPro" id="IPR017443">
    <property type="entry name" value="RuBisCO_lsu_fd_N"/>
</dbReference>
<dbReference type="InterPro" id="IPR036422">
    <property type="entry name" value="RuBisCO_lsu_N_sf"/>
</dbReference>
<dbReference type="InterPro" id="IPR020888">
    <property type="entry name" value="RuBisCO_lsuI"/>
</dbReference>
<dbReference type="NCBIfam" id="NF003252">
    <property type="entry name" value="PRK04208.1"/>
    <property type="match status" value="1"/>
</dbReference>
<dbReference type="PANTHER" id="PTHR42704">
    <property type="entry name" value="RIBULOSE BISPHOSPHATE CARBOXYLASE"/>
    <property type="match status" value="1"/>
</dbReference>
<dbReference type="PANTHER" id="PTHR42704:SF17">
    <property type="entry name" value="RIBULOSE BISPHOSPHATE CARBOXYLASE LARGE CHAIN"/>
    <property type="match status" value="1"/>
</dbReference>
<dbReference type="Pfam" id="PF00016">
    <property type="entry name" value="RuBisCO_large"/>
    <property type="match status" value="1"/>
</dbReference>
<dbReference type="Pfam" id="PF02788">
    <property type="entry name" value="RuBisCO_large_N"/>
    <property type="match status" value="1"/>
</dbReference>
<dbReference type="SFLD" id="SFLDG01052">
    <property type="entry name" value="RuBisCO"/>
    <property type="match status" value="1"/>
</dbReference>
<dbReference type="SFLD" id="SFLDS00014">
    <property type="entry name" value="RuBisCO"/>
    <property type="match status" value="1"/>
</dbReference>
<dbReference type="SFLD" id="SFLDG00301">
    <property type="entry name" value="RuBisCO-like_proteins"/>
    <property type="match status" value="1"/>
</dbReference>
<dbReference type="SUPFAM" id="SSF51649">
    <property type="entry name" value="RuBisCo, C-terminal domain"/>
    <property type="match status" value="1"/>
</dbReference>
<dbReference type="SUPFAM" id="SSF54966">
    <property type="entry name" value="RuBisCO, large subunit, small (N-terminal) domain"/>
    <property type="match status" value="1"/>
</dbReference>
<dbReference type="PROSITE" id="PS00157">
    <property type="entry name" value="RUBISCO_LARGE"/>
    <property type="match status" value="1"/>
</dbReference>
<sequence length="493" mass="54797">MDTPTPNITNEALTVRGKERYRSGVLEYRKMGYWEPDYEPKITDVISLFRITPQDGVDPVEAAAAVAGESSTATWTVVWTDRLTACEKYRAKAYRVDPVPNAPGQYFAYIAYDLALFEPGSIANLTASIIGNVFGFKPLKALRLEDMRLPVAYVKTFDGPATGIVVERERLDKFGRPLLGATVKPKLGLSGRNYGRVVYEALKGGLDFTKDDENINSQPFMHWRDRFLYCMEAVNKAQAATGEVKGTYLNVTAGTMEDMYERASFAHELGSSIIMIDLVIGYTAIQSMSKWARKHDMILHLHRAGHGTYTRHKTHGVSFRVISKWMRLAGVDHIHAGTVVGKLEGDPLTTRGFYDILREDYNETRYEHGIFFDQDWAGTRKVMPVASGGIHAGQMHQLLHHLGEDVVLQFGGGTIGHPQGIAAGAMANRVALEAMILARNEGRDYLAEGPQILNDAARHCLPLRQALDTWGEVTFNYASTDTPDFVPTAMPAY</sequence>
<feature type="chain" id="PRO_0000355747" description="Ribulose bisphosphate carboxylase large chain">
    <location>
        <begin position="1"/>
        <end position="493"/>
    </location>
</feature>
<feature type="active site" description="Proton acceptor" evidence="1">
    <location>
        <position position="184"/>
    </location>
</feature>
<feature type="active site" description="Proton acceptor" evidence="1">
    <location>
        <position position="302"/>
    </location>
</feature>
<feature type="binding site" description="in homodimeric partner" evidence="1">
    <location>
        <position position="132"/>
    </location>
    <ligand>
        <name>substrate</name>
    </ligand>
</feature>
<feature type="binding site" evidence="1">
    <location>
        <position position="182"/>
    </location>
    <ligand>
        <name>substrate</name>
    </ligand>
</feature>
<feature type="binding site" evidence="1">
    <location>
        <position position="186"/>
    </location>
    <ligand>
        <name>substrate</name>
    </ligand>
</feature>
<feature type="binding site" description="via carbamate group" evidence="1">
    <location>
        <position position="210"/>
    </location>
    <ligand>
        <name>Mg(2+)</name>
        <dbReference type="ChEBI" id="CHEBI:18420"/>
    </ligand>
</feature>
<feature type="binding site" evidence="1">
    <location>
        <position position="212"/>
    </location>
    <ligand>
        <name>Mg(2+)</name>
        <dbReference type="ChEBI" id="CHEBI:18420"/>
    </ligand>
</feature>
<feature type="binding site" evidence="1">
    <location>
        <position position="213"/>
    </location>
    <ligand>
        <name>Mg(2+)</name>
        <dbReference type="ChEBI" id="CHEBI:18420"/>
    </ligand>
</feature>
<feature type="binding site" evidence="1">
    <location>
        <position position="303"/>
    </location>
    <ligand>
        <name>substrate</name>
    </ligand>
</feature>
<feature type="binding site" evidence="1">
    <location>
        <position position="335"/>
    </location>
    <ligand>
        <name>substrate</name>
    </ligand>
</feature>
<feature type="binding site" evidence="1">
    <location>
        <position position="387"/>
    </location>
    <ligand>
        <name>substrate</name>
    </ligand>
</feature>
<feature type="site" description="Transition state stabilizer" evidence="1">
    <location>
        <position position="342"/>
    </location>
</feature>
<feature type="modified residue" description="N6-carboxylysine" evidence="1">
    <location>
        <position position="210"/>
    </location>
</feature>
<accession>A5FWR1</accession>